<sequence>MLLLMFALLQDGELRKAEILSIRQRKDGPSFYVHYVDFNKRLDEWIDASRLDLSHEVEWPQPEKPEKKKTGVGNKAPSKNAQKRARADSRDVSATPDLLTGKNVNVGKAQRPSKAGGKENRDGTPLSMPIVTAEAISTDGTPKAESDDVEMVDVSFTDGKSIKEEERALGLMSREEEIERLRTSGSMTQNPTEIHRVRNLNRLQMGKYDIEPWYFSPYPASFSDADIIYIDEFCLSYFDDKRAFERHRTKCTLVHPPGNEIYRDDYISFFEVDGRRQRTWCRNLCLLSKLFLDHKTLYYDVDPFLFYCMCTRDETGCHLVGYFSKEKDSAEGYNLACILTLPQYQRRGFGRLLISFSYELSKREGKLGSPEKPLSDLGLLGYRQYWRETLVEILMEPGRETVSENELALLTSMTEKDVHETLVVLNMLRYYKGNWVIVLTDYVVEQHKKRLEKEKLKGARKIDPARLQWKPPVFTASSRTWNW</sequence>
<dbReference type="EC" id="2.3.1.48" evidence="3"/>
<dbReference type="EC" id="2.3.1.-" evidence="2 3"/>
<dbReference type="EMBL" id="AAHF01000008">
    <property type="protein sequence ID" value="EAL87644.1"/>
    <property type="molecule type" value="Genomic_DNA"/>
</dbReference>
<dbReference type="RefSeq" id="XP_749682.1">
    <property type="nucleotide sequence ID" value="XM_744589.1"/>
</dbReference>
<dbReference type="SMR" id="Q4WHG1"/>
<dbReference type="FunCoup" id="Q4WHG1">
    <property type="interactions" value="938"/>
</dbReference>
<dbReference type="STRING" id="330879.Q4WHG1"/>
<dbReference type="EnsemblFungi" id="EAL87644">
    <property type="protein sequence ID" value="EAL87644"/>
    <property type="gene ID" value="AFUA_2G05530"/>
</dbReference>
<dbReference type="GeneID" id="3506677"/>
<dbReference type="KEGG" id="afm:AFUA_2G05530"/>
<dbReference type="eggNOG" id="KOG2747">
    <property type="taxonomic scope" value="Eukaryota"/>
</dbReference>
<dbReference type="HOGENOM" id="CLU_011815_2_0_1"/>
<dbReference type="InParanoid" id="Q4WHG1"/>
<dbReference type="OMA" id="QYQRHGY"/>
<dbReference type="OrthoDB" id="787137at2759"/>
<dbReference type="Proteomes" id="UP000002530">
    <property type="component" value="Chromosome 2"/>
</dbReference>
<dbReference type="GO" id="GO:0000785">
    <property type="term" value="C:chromatin"/>
    <property type="evidence" value="ECO:0000318"/>
    <property type="project" value="GO_Central"/>
</dbReference>
<dbReference type="GO" id="GO:0035267">
    <property type="term" value="C:NuA4 histone acetyltransferase complex"/>
    <property type="evidence" value="ECO:0007669"/>
    <property type="project" value="EnsemblFungi"/>
</dbReference>
<dbReference type="GO" id="GO:0005634">
    <property type="term" value="C:nucleus"/>
    <property type="evidence" value="ECO:0000318"/>
    <property type="project" value="GO_Central"/>
</dbReference>
<dbReference type="GO" id="GO:0005721">
    <property type="term" value="C:pericentric heterochromatin"/>
    <property type="evidence" value="ECO:0007669"/>
    <property type="project" value="EnsemblFungi"/>
</dbReference>
<dbReference type="GO" id="GO:0035861">
    <property type="term" value="C:site of double-strand break"/>
    <property type="evidence" value="ECO:0007669"/>
    <property type="project" value="EnsemblFungi"/>
</dbReference>
<dbReference type="GO" id="GO:0000812">
    <property type="term" value="C:Swr1 complex"/>
    <property type="evidence" value="ECO:0007669"/>
    <property type="project" value="EnsemblFungi"/>
</dbReference>
<dbReference type="GO" id="GO:0003682">
    <property type="term" value="F:chromatin binding"/>
    <property type="evidence" value="ECO:0000318"/>
    <property type="project" value="GO_Central"/>
</dbReference>
<dbReference type="GO" id="GO:0004402">
    <property type="term" value="F:histone acetyltransferase activity"/>
    <property type="evidence" value="ECO:0000318"/>
    <property type="project" value="GO_Central"/>
</dbReference>
<dbReference type="GO" id="GO:0044016">
    <property type="term" value="F:histone H3K4 acetyltransferase activity"/>
    <property type="evidence" value="ECO:0007669"/>
    <property type="project" value="EnsemblFungi"/>
</dbReference>
<dbReference type="GO" id="GO:0106226">
    <property type="term" value="F:peptide 2-hydroxyisobutyryltransferase activity"/>
    <property type="evidence" value="ECO:0007669"/>
    <property type="project" value="RHEA"/>
</dbReference>
<dbReference type="GO" id="GO:0140065">
    <property type="term" value="F:peptide butyryltransferase activity"/>
    <property type="evidence" value="ECO:0007669"/>
    <property type="project" value="EnsemblFungi"/>
</dbReference>
<dbReference type="GO" id="GO:0140064">
    <property type="term" value="F:peptide crotonyltransferase activity"/>
    <property type="evidence" value="ECO:0007669"/>
    <property type="project" value="RHEA"/>
</dbReference>
<dbReference type="GO" id="GO:0003712">
    <property type="term" value="F:transcription coregulator activity"/>
    <property type="evidence" value="ECO:0000318"/>
    <property type="project" value="GO_Central"/>
</dbReference>
<dbReference type="GO" id="GO:0006281">
    <property type="term" value="P:DNA repair"/>
    <property type="evidence" value="ECO:0007669"/>
    <property type="project" value="UniProtKB-KW"/>
</dbReference>
<dbReference type="GO" id="GO:0140861">
    <property type="term" value="P:DNA repair-dependent chromatin remodeling"/>
    <property type="evidence" value="ECO:0007669"/>
    <property type="project" value="EnsemblFungi"/>
</dbReference>
<dbReference type="GO" id="GO:0031453">
    <property type="term" value="P:positive regulation of heterochromatin formation"/>
    <property type="evidence" value="ECO:0007669"/>
    <property type="project" value="EnsemblFungi"/>
</dbReference>
<dbReference type="GO" id="GO:0006357">
    <property type="term" value="P:regulation of transcription by RNA polymerase II"/>
    <property type="evidence" value="ECO:0000318"/>
    <property type="project" value="GO_Central"/>
</dbReference>
<dbReference type="CDD" id="cd04301">
    <property type="entry name" value="NAT_SF"/>
    <property type="match status" value="1"/>
</dbReference>
<dbReference type="FunFam" id="1.10.10.10:FF:000569">
    <property type="entry name" value="Histone acetyltransferase"/>
    <property type="match status" value="1"/>
</dbReference>
<dbReference type="FunFam" id="3.30.60.60:FF:000001">
    <property type="entry name" value="Histone acetyltransferase"/>
    <property type="match status" value="1"/>
</dbReference>
<dbReference type="FunFam" id="3.40.630.30:FF:000002">
    <property type="entry name" value="Histone acetyltransferase"/>
    <property type="match status" value="1"/>
</dbReference>
<dbReference type="Gene3D" id="2.30.30.140">
    <property type="match status" value="1"/>
</dbReference>
<dbReference type="Gene3D" id="3.40.630.30">
    <property type="match status" value="1"/>
</dbReference>
<dbReference type="Gene3D" id="3.30.60.60">
    <property type="entry name" value="N-acetyl transferase-like"/>
    <property type="match status" value="1"/>
</dbReference>
<dbReference type="Gene3D" id="1.10.10.10">
    <property type="entry name" value="Winged helix-like DNA-binding domain superfamily/Winged helix DNA-binding domain"/>
    <property type="match status" value="1"/>
</dbReference>
<dbReference type="InterPro" id="IPR016181">
    <property type="entry name" value="Acyl_CoA_acyltransferase"/>
</dbReference>
<dbReference type="InterPro" id="IPR016197">
    <property type="entry name" value="Chromo-like_dom_sf"/>
</dbReference>
<dbReference type="InterPro" id="IPR000953">
    <property type="entry name" value="Chromo/chromo_shadow_dom"/>
</dbReference>
<dbReference type="InterPro" id="IPR002717">
    <property type="entry name" value="HAT_MYST-type"/>
</dbReference>
<dbReference type="InterPro" id="IPR050603">
    <property type="entry name" value="MYST_HAT"/>
</dbReference>
<dbReference type="InterPro" id="IPR025995">
    <property type="entry name" value="Tudor-knot"/>
</dbReference>
<dbReference type="InterPro" id="IPR036388">
    <property type="entry name" value="WH-like_DNA-bd_sf"/>
</dbReference>
<dbReference type="InterPro" id="IPR040706">
    <property type="entry name" value="Zf-MYST"/>
</dbReference>
<dbReference type="PANTHER" id="PTHR10615">
    <property type="entry name" value="HISTONE ACETYLTRANSFERASE"/>
    <property type="match status" value="1"/>
</dbReference>
<dbReference type="PANTHER" id="PTHR10615:SF218">
    <property type="entry name" value="HISTONE ACETYLTRANSFERASE ESA1"/>
    <property type="match status" value="1"/>
</dbReference>
<dbReference type="Pfam" id="PF01853">
    <property type="entry name" value="MOZ_SAS"/>
    <property type="match status" value="1"/>
</dbReference>
<dbReference type="Pfam" id="PF11717">
    <property type="entry name" value="Tudor-knot"/>
    <property type="match status" value="1"/>
</dbReference>
<dbReference type="Pfam" id="PF17772">
    <property type="entry name" value="zf-MYST"/>
    <property type="match status" value="1"/>
</dbReference>
<dbReference type="SMART" id="SM00298">
    <property type="entry name" value="CHROMO"/>
    <property type="match status" value="1"/>
</dbReference>
<dbReference type="SUPFAM" id="SSF55729">
    <property type="entry name" value="Acyl-CoA N-acyltransferases (Nat)"/>
    <property type="match status" value="1"/>
</dbReference>
<dbReference type="SUPFAM" id="SSF54160">
    <property type="entry name" value="Chromo domain-like"/>
    <property type="match status" value="1"/>
</dbReference>
<dbReference type="PROSITE" id="PS51726">
    <property type="entry name" value="MYST_HAT"/>
    <property type="match status" value="1"/>
</dbReference>
<accession>Q4WHG1</accession>
<gene>
    <name type="primary">esa1</name>
    <name type="ORF">AFUA_2G05530</name>
</gene>
<evidence type="ECO:0000250" key="1"/>
<evidence type="ECO:0000250" key="2">
    <source>
        <dbReference type="UniProtKB" id="O94446"/>
    </source>
</evidence>
<evidence type="ECO:0000250" key="3">
    <source>
        <dbReference type="UniProtKB" id="Q08649"/>
    </source>
</evidence>
<evidence type="ECO:0000255" key="4"/>
<evidence type="ECO:0000255" key="5">
    <source>
        <dbReference type="PROSITE-ProRule" id="PRU01063"/>
    </source>
</evidence>
<evidence type="ECO:0000256" key="6">
    <source>
        <dbReference type="SAM" id="MobiDB-lite"/>
    </source>
</evidence>
<evidence type="ECO:0000305" key="7"/>
<comment type="function">
    <text evidence="2 3">Catalytic component of the NuA4 histone acetyltransferase (HAT) complex which is involved in epigenetic transcriptional activation of selected genes principally by acetylation of nucleosomal histones H4, H3, H2B, H2A and H2A variant H2A.Z (By similarity). Acetylates histone H4 to form H4K5ac, H4K8ac, H4K12ac and H4K16ac, histone H3 to form H3K14ac, and histone H2A to form H2AK4ac and H2AK7ac (By similarity). The NuA4 complex is involved in the DNA damage response and is required for chromosome segregation. The NuA4 complex plays a direct role in repair of DNA double-strand breaks (DSBs) through homologous recombination (By similarity). Recruitment to promoters depends on H3K4me. Also acetylates non-histone proteins (By similarity). In addition to protein acetyltransferase, can use different acyl-CoA substrates, such as 2-hydroxyisobutanoyl-CoA (2-hydroxyisobutyryl-CoA) or (2E)-butenoyl-CoA (crotonyl-CoA), and is able to mediate protein 2-hydroxyisobutyrylation and crotonylation, respectively (By similarity).</text>
</comment>
<comment type="catalytic activity">
    <reaction evidence="2">
        <text>L-lysyl-[histone] + acetyl-CoA = N(6)-acetyl-L-lysyl-[histone] + CoA + H(+)</text>
        <dbReference type="Rhea" id="RHEA:21992"/>
        <dbReference type="Rhea" id="RHEA-COMP:9845"/>
        <dbReference type="Rhea" id="RHEA-COMP:11338"/>
        <dbReference type="ChEBI" id="CHEBI:15378"/>
        <dbReference type="ChEBI" id="CHEBI:29969"/>
        <dbReference type="ChEBI" id="CHEBI:57287"/>
        <dbReference type="ChEBI" id="CHEBI:57288"/>
        <dbReference type="ChEBI" id="CHEBI:61930"/>
        <dbReference type="EC" id="2.3.1.48"/>
    </reaction>
    <physiologicalReaction direction="left-to-right" evidence="2">
        <dbReference type="Rhea" id="RHEA:21993"/>
    </physiologicalReaction>
</comment>
<comment type="catalytic activity">
    <reaction evidence="3">
        <text>L-lysyl-[protein] + acetyl-CoA = N(6)-acetyl-L-lysyl-[protein] + CoA + H(+)</text>
        <dbReference type="Rhea" id="RHEA:45948"/>
        <dbReference type="Rhea" id="RHEA-COMP:9752"/>
        <dbReference type="Rhea" id="RHEA-COMP:10731"/>
        <dbReference type="ChEBI" id="CHEBI:15378"/>
        <dbReference type="ChEBI" id="CHEBI:29969"/>
        <dbReference type="ChEBI" id="CHEBI:57287"/>
        <dbReference type="ChEBI" id="CHEBI:57288"/>
        <dbReference type="ChEBI" id="CHEBI:61930"/>
    </reaction>
    <physiologicalReaction direction="left-to-right" evidence="3">
        <dbReference type="Rhea" id="RHEA:45949"/>
    </physiologicalReaction>
</comment>
<comment type="catalytic activity">
    <reaction evidence="2">
        <text>2-hydroxyisobutanoyl-CoA + L-lysyl-[protein] = N(6)-(2-hydroxyisobutanoyl)-L-lysyl-[protein] + CoA + H(+)</text>
        <dbReference type="Rhea" id="RHEA:24180"/>
        <dbReference type="Rhea" id="RHEA-COMP:9752"/>
        <dbReference type="Rhea" id="RHEA-COMP:15921"/>
        <dbReference type="ChEBI" id="CHEBI:15378"/>
        <dbReference type="ChEBI" id="CHEBI:29969"/>
        <dbReference type="ChEBI" id="CHEBI:57287"/>
        <dbReference type="ChEBI" id="CHEBI:131780"/>
        <dbReference type="ChEBI" id="CHEBI:144968"/>
    </reaction>
    <physiologicalReaction direction="left-to-right" evidence="2">
        <dbReference type="Rhea" id="RHEA:24181"/>
    </physiologicalReaction>
</comment>
<comment type="catalytic activity">
    <reaction evidence="3">
        <text>(2E)-butenoyl-CoA + L-lysyl-[protein] = N(6)-(2E)-butenoyl-L-lysyl-[protein] + CoA + H(+)</text>
        <dbReference type="Rhea" id="RHEA:53908"/>
        <dbReference type="Rhea" id="RHEA-COMP:9752"/>
        <dbReference type="Rhea" id="RHEA-COMP:13707"/>
        <dbReference type="ChEBI" id="CHEBI:15378"/>
        <dbReference type="ChEBI" id="CHEBI:29969"/>
        <dbReference type="ChEBI" id="CHEBI:57287"/>
        <dbReference type="ChEBI" id="CHEBI:57332"/>
        <dbReference type="ChEBI" id="CHEBI:137954"/>
    </reaction>
    <physiologicalReaction direction="left-to-right" evidence="3">
        <dbReference type="Rhea" id="RHEA:53909"/>
    </physiologicalReaction>
</comment>
<comment type="subunit">
    <text evidence="3">Component of the NuA4 histone acetyltransferase complex.</text>
</comment>
<comment type="subcellular location">
    <subcellularLocation>
        <location evidence="2">Nucleus</location>
    </subcellularLocation>
    <subcellularLocation>
        <location evidence="2">Chromosome</location>
    </subcellularLocation>
    <text evidence="2">Following DNA damage, localizes to sites of DNA damage, such as double stand breaks (DSBs).</text>
</comment>
<comment type="domain">
    <text evidence="3">The ESA1-RPD3 motif is common to ESA1 and RPD3 and is required for ESA1 histone acetyl-transferase (HAT) activity and RPD3 histone deacetylase (HDAC) activity.</text>
</comment>
<comment type="PTM">
    <text evidence="3">Autoacetylation at Lys-295 is required for proper function.</text>
</comment>
<comment type="similarity">
    <text evidence="7">Belongs to the MYST (SAS/MOZ) family.</text>
</comment>
<organism>
    <name type="scientific">Aspergillus fumigatus (strain ATCC MYA-4609 / CBS 101355 / FGSC A1100 / Af293)</name>
    <name type="common">Neosartorya fumigata</name>
    <dbReference type="NCBI Taxonomy" id="330879"/>
    <lineage>
        <taxon>Eukaryota</taxon>
        <taxon>Fungi</taxon>
        <taxon>Dikarya</taxon>
        <taxon>Ascomycota</taxon>
        <taxon>Pezizomycotina</taxon>
        <taxon>Eurotiomycetes</taxon>
        <taxon>Eurotiomycetidae</taxon>
        <taxon>Eurotiales</taxon>
        <taxon>Aspergillaceae</taxon>
        <taxon>Aspergillus</taxon>
        <taxon>Aspergillus subgen. Fumigati</taxon>
    </lineage>
</organism>
<name>ESA1_ASPFU</name>
<reference key="1">
    <citation type="journal article" date="2005" name="Nature">
        <title>Genomic sequence of the pathogenic and allergenic filamentous fungus Aspergillus fumigatus.</title>
        <authorList>
            <person name="Nierman W.C."/>
            <person name="Pain A."/>
            <person name="Anderson M.J."/>
            <person name="Wortman J.R."/>
            <person name="Kim H.S."/>
            <person name="Arroyo J."/>
            <person name="Berriman M."/>
            <person name="Abe K."/>
            <person name="Archer D.B."/>
            <person name="Bermejo C."/>
            <person name="Bennett J.W."/>
            <person name="Bowyer P."/>
            <person name="Chen D."/>
            <person name="Collins M."/>
            <person name="Coulsen R."/>
            <person name="Davies R."/>
            <person name="Dyer P.S."/>
            <person name="Farman M.L."/>
            <person name="Fedorova N."/>
            <person name="Fedorova N.D."/>
            <person name="Feldblyum T.V."/>
            <person name="Fischer R."/>
            <person name="Fosker N."/>
            <person name="Fraser A."/>
            <person name="Garcia J.L."/>
            <person name="Garcia M.J."/>
            <person name="Goble A."/>
            <person name="Goldman G.H."/>
            <person name="Gomi K."/>
            <person name="Griffith-Jones S."/>
            <person name="Gwilliam R."/>
            <person name="Haas B.J."/>
            <person name="Haas H."/>
            <person name="Harris D.E."/>
            <person name="Horiuchi H."/>
            <person name="Huang J."/>
            <person name="Humphray S."/>
            <person name="Jimenez J."/>
            <person name="Keller N."/>
            <person name="Khouri H."/>
            <person name="Kitamoto K."/>
            <person name="Kobayashi T."/>
            <person name="Konzack S."/>
            <person name="Kulkarni R."/>
            <person name="Kumagai T."/>
            <person name="Lafton A."/>
            <person name="Latge J.-P."/>
            <person name="Li W."/>
            <person name="Lord A."/>
            <person name="Lu C."/>
            <person name="Majoros W.H."/>
            <person name="May G.S."/>
            <person name="Miller B.L."/>
            <person name="Mohamoud Y."/>
            <person name="Molina M."/>
            <person name="Monod M."/>
            <person name="Mouyna I."/>
            <person name="Mulligan S."/>
            <person name="Murphy L.D."/>
            <person name="O'Neil S."/>
            <person name="Paulsen I."/>
            <person name="Penalva M.A."/>
            <person name="Pertea M."/>
            <person name="Price C."/>
            <person name="Pritchard B.L."/>
            <person name="Quail M.A."/>
            <person name="Rabbinowitsch E."/>
            <person name="Rawlins N."/>
            <person name="Rajandream M.A."/>
            <person name="Reichard U."/>
            <person name="Renauld H."/>
            <person name="Robson G.D."/>
            <person name="Rodriguez de Cordoba S."/>
            <person name="Rodriguez-Pena J.M."/>
            <person name="Ronning C.M."/>
            <person name="Rutter S."/>
            <person name="Salzberg S.L."/>
            <person name="Sanchez M."/>
            <person name="Sanchez-Ferrero J.C."/>
            <person name="Saunders D."/>
            <person name="Seeger K."/>
            <person name="Squares R."/>
            <person name="Squares S."/>
            <person name="Takeuchi M."/>
            <person name="Tekaia F."/>
            <person name="Turner G."/>
            <person name="Vazquez de Aldana C.R."/>
            <person name="Weidman J."/>
            <person name="White O."/>
            <person name="Woodward J.R."/>
            <person name="Yu J.-H."/>
            <person name="Fraser C.M."/>
            <person name="Galagan J.E."/>
            <person name="Asai K."/>
            <person name="Machida M."/>
            <person name="Hall N."/>
            <person name="Barrell B.G."/>
            <person name="Denning D.W."/>
        </authorList>
    </citation>
    <scope>NUCLEOTIDE SEQUENCE [LARGE SCALE GENOMIC DNA]</scope>
    <source>
        <strain>ATCC MYA-4609 / CBS 101355 / FGSC A1100 / Af293</strain>
    </source>
</reference>
<proteinExistence type="inferred from homology"/>
<keyword id="KW-0007">Acetylation</keyword>
<keyword id="KW-0010">Activator</keyword>
<keyword id="KW-0156">Chromatin regulator</keyword>
<keyword id="KW-0158">Chromosome</keyword>
<keyword id="KW-0227">DNA damage</keyword>
<keyword id="KW-0234">DNA repair</keyword>
<keyword id="KW-0539">Nucleus</keyword>
<keyword id="KW-1185">Reference proteome</keyword>
<keyword id="KW-0804">Transcription</keyword>
<keyword id="KW-0805">Transcription regulation</keyword>
<keyword id="KW-0808">Transferase</keyword>
<feature type="chain" id="PRO_0000051552" description="Histone acetyltransferase esa1">
    <location>
        <begin position="1"/>
        <end position="483"/>
    </location>
</feature>
<feature type="domain" description="Tudor-knot" evidence="4">
    <location>
        <begin position="10"/>
        <end position="53"/>
    </location>
</feature>
<feature type="domain" description="MYST-type HAT" evidence="5">
    <location>
        <begin position="195"/>
        <end position="471"/>
    </location>
</feature>
<feature type="zinc finger region" description="C2HC MYST-type; degenerate" evidence="5">
    <location>
        <begin position="228"/>
        <end position="253"/>
    </location>
</feature>
<feature type="region of interest" description="Disordered" evidence="6">
    <location>
        <begin position="57"/>
        <end position="127"/>
    </location>
</feature>
<feature type="short sequence motif" description="ESA1-RPD3 motif" evidence="1">
    <location>
        <begin position="278"/>
        <end position="299"/>
    </location>
</feature>
<feature type="compositionally biased region" description="Basic and acidic residues" evidence="6">
    <location>
        <begin position="57"/>
        <end position="69"/>
    </location>
</feature>
<feature type="active site" description="Proton donor/acceptor" evidence="3">
    <location>
        <position position="371"/>
    </location>
</feature>
<feature type="binding site" evidence="3">
    <location>
        <begin position="336"/>
        <end position="340"/>
    </location>
    <ligand>
        <name>acetyl-CoA</name>
        <dbReference type="ChEBI" id="CHEBI:57288"/>
    </ligand>
</feature>
<feature type="binding site" evidence="3">
    <location>
        <begin position="345"/>
        <end position="351"/>
    </location>
    <ligand>
        <name>acetyl-CoA</name>
        <dbReference type="ChEBI" id="CHEBI:57288"/>
    </ligand>
</feature>
<feature type="binding site" evidence="3">
    <location>
        <position position="375"/>
    </location>
    <ligand>
        <name>acetyl-CoA</name>
        <dbReference type="ChEBI" id="CHEBI:57288"/>
    </ligand>
</feature>
<feature type="site" description="Important for catalytic activity" evidence="3">
    <location>
        <position position="337"/>
    </location>
</feature>
<feature type="modified residue" description="N6-acetyllysine; by autocatalysis" evidence="3">
    <location>
        <position position="295"/>
    </location>
</feature>
<protein>
    <recommendedName>
        <fullName>Histone acetyltransferase esa1</fullName>
        <ecNumber evidence="3">2.3.1.48</ecNumber>
    </recommendedName>
    <alternativeName>
        <fullName evidence="7">Protein 2-hydroxyisobutyryltransferase esa1</fullName>
        <ecNumber evidence="2">2.3.1.-</ecNumber>
    </alternativeName>
    <alternativeName>
        <fullName evidence="7">Protein acetyltransferase esa1</fullName>
        <ecNumber evidence="3">2.3.1.-</ecNumber>
    </alternativeName>
    <alternativeName>
        <fullName evidence="7">Protein crotonyltransferase esa1</fullName>
        <ecNumber evidence="3">2.3.1.-</ecNumber>
    </alternativeName>
</protein>